<gene>
    <name type="primary">tal</name>
    <name type="ordered locus">BQ2027_MB1483C</name>
</gene>
<feature type="chain" id="PRO_0000173634" description="Transaldolase">
    <location>
        <begin position="1"/>
        <end position="373"/>
    </location>
</feature>
<feature type="active site" description="Schiff-base intermediate with substrate" evidence="1">
    <location>
        <position position="143"/>
    </location>
</feature>
<evidence type="ECO:0000250" key="1"/>
<evidence type="ECO:0000305" key="2"/>
<name>TAL_MYCBO</name>
<protein>
    <recommendedName>
        <fullName>Transaldolase</fullName>
        <ecNumber>2.2.1.2</ecNumber>
    </recommendedName>
</protein>
<reference key="1">
    <citation type="journal article" date="2003" name="Proc. Natl. Acad. Sci. U.S.A.">
        <title>The complete genome sequence of Mycobacterium bovis.</title>
        <authorList>
            <person name="Garnier T."/>
            <person name="Eiglmeier K."/>
            <person name="Camus J.-C."/>
            <person name="Medina N."/>
            <person name="Mansoor H."/>
            <person name="Pryor M."/>
            <person name="Duthoy S."/>
            <person name="Grondin S."/>
            <person name="Lacroix C."/>
            <person name="Monsempe C."/>
            <person name="Simon S."/>
            <person name="Harris B."/>
            <person name="Atkin R."/>
            <person name="Doggett J."/>
            <person name="Mayes R."/>
            <person name="Keating L."/>
            <person name="Wheeler P.R."/>
            <person name="Parkhill J."/>
            <person name="Barrell B.G."/>
            <person name="Cole S.T."/>
            <person name="Gordon S.V."/>
            <person name="Hewinson R.G."/>
        </authorList>
    </citation>
    <scope>NUCLEOTIDE SEQUENCE [LARGE SCALE GENOMIC DNA]</scope>
    <source>
        <strain>ATCC BAA-935 / AF2122/97</strain>
    </source>
</reference>
<reference key="2">
    <citation type="journal article" date="2017" name="Genome Announc.">
        <title>Updated reference genome sequence and annotation of Mycobacterium bovis AF2122/97.</title>
        <authorList>
            <person name="Malone K.M."/>
            <person name="Farrell D."/>
            <person name="Stuber T.P."/>
            <person name="Schubert O.T."/>
            <person name="Aebersold R."/>
            <person name="Robbe-Austerman S."/>
            <person name="Gordon S.V."/>
        </authorList>
    </citation>
    <scope>NUCLEOTIDE SEQUENCE [LARGE SCALE GENOMIC DNA]</scope>
    <scope>GENOME REANNOTATION</scope>
    <source>
        <strain>ATCC BAA-935 / AF2122/97</strain>
    </source>
</reference>
<proteinExistence type="inferred from homology"/>
<organism>
    <name type="scientific">Mycobacterium bovis (strain ATCC BAA-935 / AF2122/97)</name>
    <dbReference type="NCBI Taxonomy" id="233413"/>
    <lineage>
        <taxon>Bacteria</taxon>
        <taxon>Bacillati</taxon>
        <taxon>Actinomycetota</taxon>
        <taxon>Actinomycetes</taxon>
        <taxon>Mycobacteriales</taxon>
        <taxon>Mycobacteriaceae</taxon>
        <taxon>Mycobacterium</taxon>
        <taxon>Mycobacterium tuberculosis complex</taxon>
    </lineage>
</organism>
<comment type="function">
    <text evidence="1">Transaldolase is important for the balance of metabolites in the pentose-phosphate pathway.</text>
</comment>
<comment type="catalytic activity">
    <reaction>
        <text>D-sedoheptulose 7-phosphate + D-glyceraldehyde 3-phosphate = D-erythrose 4-phosphate + beta-D-fructose 6-phosphate</text>
        <dbReference type="Rhea" id="RHEA:17053"/>
        <dbReference type="ChEBI" id="CHEBI:16897"/>
        <dbReference type="ChEBI" id="CHEBI:57483"/>
        <dbReference type="ChEBI" id="CHEBI:57634"/>
        <dbReference type="ChEBI" id="CHEBI:59776"/>
        <dbReference type="EC" id="2.2.1.2"/>
    </reaction>
</comment>
<comment type="pathway">
    <text>Carbohydrate degradation; pentose phosphate pathway; D-glyceraldehyde 3-phosphate and beta-D-fructose 6-phosphate from D-ribose 5-phosphate and D-xylulose 5-phosphate (non-oxidative stage): step 2/3.</text>
</comment>
<comment type="subcellular location">
    <subcellularLocation>
        <location evidence="1">Cytoplasm</location>
    </subcellularLocation>
</comment>
<comment type="similarity">
    <text evidence="2">Belongs to the transaldolase family. Type 2 subfamily.</text>
</comment>
<sequence length="373" mass="40691">MTAQNPNLAALSAAGVSVWLDDLSRDRLRSGNLQELIDTKSVVGVTTNPSIFQKALSEGHTYDAQIAELAARGADVDATIRTVTTDDVRSACDVLVPQWEDSDGVDGRVSIEVDPRLAHETEKTIQQAIELWKIVDRPNLFIKIPATKAGLPAISAVLAEGISVNVTLIFSVQRYREVMDAYLTGMEKARQAGHSLSKIHSVASFFVSRVDTEIDKRLDRIGSRQALELRGQAGVANARLAYAAYREVFEDSDRYRSLKVDGARVQRPLWASTGVKNPDYSDTLYVTELVAPHTVNTMPEKTIDAVADHGVIQGDTVTGTASDAQAVFDQLGAIGIDLTDVFAVLEEEGVRKFEASWNELLQETRAHLDTAAQ</sequence>
<dbReference type="EC" id="2.2.1.2"/>
<dbReference type="EMBL" id="LT708304">
    <property type="protein sequence ID" value="SIU00086.1"/>
    <property type="molecule type" value="Genomic_DNA"/>
</dbReference>
<dbReference type="RefSeq" id="NP_855135.1">
    <property type="nucleotide sequence ID" value="NC_002945.3"/>
</dbReference>
<dbReference type="RefSeq" id="WP_003407447.1">
    <property type="nucleotide sequence ID" value="NC_002945.4"/>
</dbReference>
<dbReference type="SMR" id="P59955"/>
<dbReference type="KEGG" id="mbo:BQ2027_MB1483C"/>
<dbReference type="PATRIC" id="fig|233413.5.peg.1622"/>
<dbReference type="UniPathway" id="UPA00115">
    <property type="reaction ID" value="UER00414"/>
</dbReference>
<dbReference type="Proteomes" id="UP000001419">
    <property type="component" value="Chromosome"/>
</dbReference>
<dbReference type="GO" id="GO:0005737">
    <property type="term" value="C:cytoplasm"/>
    <property type="evidence" value="ECO:0007669"/>
    <property type="project" value="UniProtKB-SubCell"/>
</dbReference>
<dbReference type="GO" id="GO:0004801">
    <property type="term" value="F:transaldolase activity"/>
    <property type="evidence" value="ECO:0007669"/>
    <property type="project" value="UniProtKB-UniRule"/>
</dbReference>
<dbReference type="GO" id="GO:0005975">
    <property type="term" value="P:carbohydrate metabolic process"/>
    <property type="evidence" value="ECO:0007669"/>
    <property type="project" value="InterPro"/>
</dbReference>
<dbReference type="GO" id="GO:0006098">
    <property type="term" value="P:pentose-phosphate shunt"/>
    <property type="evidence" value="ECO:0007669"/>
    <property type="project" value="UniProtKB-UniRule"/>
</dbReference>
<dbReference type="CDD" id="cd00955">
    <property type="entry name" value="Transaldolase_like"/>
    <property type="match status" value="1"/>
</dbReference>
<dbReference type="FunFam" id="3.20.20.70:FF:000174">
    <property type="entry name" value="Transaldolase type"/>
    <property type="match status" value="1"/>
</dbReference>
<dbReference type="Gene3D" id="3.20.20.70">
    <property type="entry name" value="Aldolase class I"/>
    <property type="match status" value="1"/>
</dbReference>
<dbReference type="HAMAP" id="MF_00493">
    <property type="entry name" value="Transaldolase_2"/>
    <property type="match status" value="1"/>
</dbReference>
<dbReference type="InterPro" id="IPR013785">
    <property type="entry name" value="Aldolase_TIM"/>
</dbReference>
<dbReference type="InterPro" id="IPR001585">
    <property type="entry name" value="TAL/FSA"/>
</dbReference>
<dbReference type="InterPro" id="IPR004732">
    <property type="entry name" value="Transaldolase_2"/>
</dbReference>
<dbReference type="InterPro" id="IPR018225">
    <property type="entry name" value="Transaldolase_AS"/>
</dbReference>
<dbReference type="NCBIfam" id="NF002881">
    <property type="entry name" value="PRK03343.1"/>
    <property type="match status" value="1"/>
</dbReference>
<dbReference type="NCBIfam" id="TIGR00876">
    <property type="entry name" value="tal_mycobact"/>
    <property type="match status" value="1"/>
</dbReference>
<dbReference type="PANTHER" id="PTHR10683">
    <property type="entry name" value="TRANSALDOLASE"/>
    <property type="match status" value="1"/>
</dbReference>
<dbReference type="PANTHER" id="PTHR10683:SF31">
    <property type="entry name" value="TRANSALDOLASE"/>
    <property type="match status" value="1"/>
</dbReference>
<dbReference type="Pfam" id="PF00923">
    <property type="entry name" value="TAL_FSA"/>
    <property type="match status" value="1"/>
</dbReference>
<dbReference type="PIRSF" id="PIRSF036915">
    <property type="entry name" value="Trnald_Bac_Plnt"/>
    <property type="match status" value="1"/>
</dbReference>
<dbReference type="SUPFAM" id="SSF51569">
    <property type="entry name" value="Aldolase"/>
    <property type="match status" value="1"/>
</dbReference>
<dbReference type="PROSITE" id="PS01054">
    <property type="entry name" value="TRANSALDOLASE_1"/>
    <property type="match status" value="1"/>
</dbReference>
<dbReference type="PROSITE" id="PS00958">
    <property type="entry name" value="TRANSALDOLASE_2"/>
    <property type="match status" value="1"/>
</dbReference>
<keyword id="KW-0963">Cytoplasm</keyword>
<keyword id="KW-0570">Pentose shunt</keyword>
<keyword id="KW-1185">Reference proteome</keyword>
<keyword id="KW-0704">Schiff base</keyword>
<keyword id="KW-0808">Transferase</keyword>
<accession>P59955</accession>
<accession>A0A1R3XYS3</accession>
<accession>X2BI00</accession>